<feature type="chain" id="PRO_0000229106" description="2,3-bisphosphoglycerate-dependent phosphoglycerate mutase">
    <location>
        <begin position="1"/>
        <end position="206"/>
    </location>
</feature>
<feature type="active site" description="Tele-phosphohistidine intermediate" evidence="1">
    <location>
        <position position="10"/>
    </location>
</feature>
<feature type="active site" description="Proton donor/acceptor" evidence="1">
    <location>
        <position position="88"/>
    </location>
</feature>
<feature type="binding site" evidence="1">
    <location>
        <begin position="9"/>
        <end position="16"/>
    </location>
    <ligand>
        <name>substrate</name>
    </ligand>
</feature>
<feature type="binding site" evidence="1">
    <location>
        <begin position="22"/>
        <end position="23"/>
    </location>
    <ligand>
        <name>substrate</name>
    </ligand>
</feature>
<feature type="binding site" evidence="1">
    <location>
        <position position="61"/>
    </location>
    <ligand>
        <name>substrate</name>
    </ligand>
</feature>
<feature type="binding site" evidence="1">
    <location>
        <begin position="88"/>
        <end position="91"/>
    </location>
    <ligand>
        <name>substrate</name>
    </ligand>
</feature>
<feature type="binding site" evidence="1">
    <location>
        <position position="99"/>
    </location>
    <ligand>
        <name>substrate</name>
    </ligand>
</feature>
<feature type="binding site" evidence="1">
    <location>
        <begin position="115"/>
        <end position="116"/>
    </location>
    <ligand>
        <name>substrate</name>
    </ligand>
</feature>
<feature type="binding site" evidence="1">
    <location>
        <begin position="159"/>
        <end position="160"/>
    </location>
    <ligand>
        <name>substrate</name>
    </ligand>
</feature>
<feature type="site" description="Transition state stabilizer" evidence="1">
    <location>
        <position position="158"/>
    </location>
</feature>
<accession>Q6FZ12</accession>
<evidence type="ECO:0000255" key="1">
    <source>
        <dbReference type="HAMAP-Rule" id="MF_01039"/>
    </source>
</evidence>
<keyword id="KW-0312">Gluconeogenesis</keyword>
<keyword id="KW-0324">Glycolysis</keyword>
<keyword id="KW-0413">Isomerase</keyword>
<comment type="function">
    <text evidence="1">Catalyzes the interconversion of 2-phosphoglycerate and 3-phosphoglycerate.</text>
</comment>
<comment type="catalytic activity">
    <reaction evidence="1">
        <text>(2R)-2-phosphoglycerate = (2R)-3-phosphoglycerate</text>
        <dbReference type="Rhea" id="RHEA:15901"/>
        <dbReference type="ChEBI" id="CHEBI:58272"/>
        <dbReference type="ChEBI" id="CHEBI:58289"/>
        <dbReference type="EC" id="5.4.2.11"/>
    </reaction>
</comment>
<comment type="pathway">
    <text evidence="1">Carbohydrate degradation; glycolysis; pyruvate from D-glyceraldehyde 3-phosphate: step 3/5.</text>
</comment>
<comment type="subunit">
    <text evidence="1">Homodimer.</text>
</comment>
<comment type="similarity">
    <text evidence="1">Belongs to the phosphoglycerate mutase family. BPG-dependent PGAM subfamily.</text>
</comment>
<organism>
    <name type="scientific">Bartonella quintana (strain Toulouse)</name>
    <name type="common">Rochalimaea quintana</name>
    <dbReference type="NCBI Taxonomy" id="283165"/>
    <lineage>
        <taxon>Bacteria</taxon>
        <taxon>Pseudomonadati</taxon>
        <taxon>Pseudomonadota</taxon>
        <taxon>Alphaproteobacteria</taxon>
        <taxon>Hyphomicrobiales</taxon>
        <taxon>Bartonellaceae</taxon>
        <taxon>Bartonella</taxon>
    </lineage>
</organism>
<proteinExistence type="inferred from homology"/>
<name>GPMA_BARQU</name>
<reference key="1">
    <citation type="journal article" date="2004" name="Proc. Natl. Acad. Sci. U.S.A.">
        <title>The louse-borne human pathogen Bartonella quintana is a genomic derivative of the zoonotic agent Bartonella henselae.</title>
        <authorList>
            <person name="Alsmark U.C.M."/>
            <person name="Frank A.C."/>
            <person name="Karlberg E.O."/>
            <person name="Legault B.-A."/>
            <person name="Ardell D.H."/>
            <person name="Canbaeck B."/>
            <person name="Eriksson A.-S."/>
            <person name="Naeslund A.K."/>
            <person name="Handley S.A."/>
            <person name="Huvet M."/>
            <person name="La Scola B."/>
            <person name="Holmberg M."/>
            <person name="Andersson S.G.E."/>
        </authorList>
    </citation>
    <scope>NUCLEOTIDE SEQUENCE [LARGE SCALE GENOMIC DNA]</scope>
    <source>
        <strain>Toulouse</strain>
    </source>
</reference>
<protein>
    <recommendedName>
        <fullName evidence="1">2,3-bisphosphoglycerate-dependent phosphoglycerate mutase</fullName>
        <shortName evidence="1">BPG-dependent PGAM</shortName>
        <shortName evidence="1">PGAM</shortName>
        <shortName evidence="1">Phosphoglyceromutase</shortName>
        <shortName evidence="1">dPGM</shortName>
        <ecNumber evidence="1">5.4.2.11</ecNumber>
    </recommendedName>
</protein>
<dbReference type="EC" id="5.4.2.11" evidence="1"/>
<dbReference type="EMBL" id="BX897700">
    <property type="protein sequence ID" value="CAF26458.1"/>
    <property type="molecule type" value="Genomic_DNA"/>
</dbReference>
<dbReference type="RefSeq" id="WP_011179681.1">
    <property type="nucleotide sequence ID" value="NC_005955.1"/>
</dbReference>
<dbReference type="SMR" id="Q6FZ12"/>
<dbReference type="KEGG" id="bqu:BQ09820"/>
<dbReference type="eggNOG" id="COG0588">
    <property type="taxonomic scope" value="Bacteria"/>
</dbReference>
<dbReference type="HOGENOM" id="CLU_033323_1_4_5"/>
<dbReference type="OrthoDB" id="9781415at2"/>
<dbReference type="UniPathway" id="UPA00109">
    <property type="reaction ID" value="UER00186"/>
</dbReference>
<dbReference type="Proteomes" id="UP000000597">
    <property type="component" value="Chromosome"/>
</dbReference>
<dbReference type="GO" id="GO:0004619">
    <property type="term" value="F:phosphoglycerate mutase activity"/>
    <property type="evidence" value="ECO:0007669"/>
    <property type="project" value="UniProtKB-EC"/>
</dbReference>
<dbReference type="GO" id="GO:0006094">
    <property type="term" value="P:gluconeogenesis"/>
    <property type="evidence" value="ECO:0007669"/>
    <property type="project" value="UniProtKB-UniRule"/>
</dbReference>
<dbReference type="GO" id="GO:0006096">
    <property type="term" value="P:glycolytic process"/>
    <property type="evidence" value="ECO:0007669"/>
    <property type="project" value="UniProtKB-UniRule"/>
</dbReference>
<dbReference type="CDD" id="cd07067">
    <property type="entry name" value="HP_PGM_like"/>
    <property type="match status" value="1"/>
</dbReference>
<dbReference type="Gene3D" id="3.40.50.1240">
    <property type="entry name" value="Phosphoglycerate mutase-like"/>
    <property type="match status" value="1"/>
</dbReference>
<dbReference type="HAMAP" id="MF_01039">
    <property type="entry name" value="PGAM_GpmA"/>
    <property type="match status" value="1"/>
</dbReference>
<dbReference type="InterPro" id="IPR013078">
    <property type="entry name" value="His_Pase_superF_clade-1"/>
</dbReference>
<dbReference type="InterPro" id="IPR029033">
    <property type="entry name" value="His_PPase_superfam"/>
</dbReference>
<dbReference type="InterPro" id="IPR001345">
    <property type="entry name" value="PG/BPGM_mutase_AS"/>
</dbReference>
<dbReference type="InterPro" id="IPR005952">
    <property type="entry name" value="Phosphogly_mut1"/>
</dbReference>
<dbReference type="NCBIfam" id="TIGR01258">
    <property type="entry name" value="pgm_1"/>
    <property type="match status" value="1"/>
</dbReference>
<dbReference type="NCBIfam" id="NF002339">
    <property type="entry name" value="PRK01295.1"/>
    <property type="match status" value="1"/>
</dbReference>
<dbReference type="PANTHER" id="PTHR11931">
    <property type="entry name" value="PHOSPHOGLYCERATE MUTASE"/>
    <property type="match status" value="1"/>
</dbReference>
<dbReference type="Pfam" id="PF00300">
    <property type="entry name" value="His_Phos_1"/>
    <property type="match status" value="1"/>
</dbReference>
<dbReference type="PIRSF" id="PIRSF000709">
    <property type="entry name" value="6PFK_2-Ptase"/>
    <property type="match status" value="1"/>
</dbReference>
<dbReference type="SMART" id="SM00855">
    <property type="entry name" value="PGAM"/>
    <property type="match status" value="1"/>
</dbReference>
<dbReference type="SUPFAM" id="SSF53254">
    <property type="entry name" value="Phosphoglycerate mutase-like"/>
    <property type="match status" value="1"/>
</dbReference>
<dbReference type="PROSITE" id="PS00175">
    <property type="entry name" value="PG_MUTASE"/>
    <property type="match status" value="1"/>
</dbReference>
<sequence length="206" mass="23008">MGRTLVLIRHGQSEWNIKNLFTGWKDPGLTEKGHAEAITAGKNLKAAGLKFDIAYTSALQRAQKTAQHILEQMGQSDLPLIKNSALNERDYGDLSGLNKDEVRQQWGEQQVQIWRRSYAVAPPNGESLRDTGARVWPYYLYHIQPHILRSQTVLIAAHGNSLRALIMALEGLNSEEIISQELTTGIPLIYTFNSDSTISSKTIITP</sequence>
<gene>
    <name evidence="1" type="primary">gpmA</name>
    <name type="ordered locus">BQ09820</name>
</gene>